<sequence>MSSLTHFDAQGQAHMVDVAAKPATHRVAVATGRIEMQPATLALIESGTAKKGDVLGIARIAGIQAAKKTSDLIPLCHPLALTRVALAFALAEKGNAPQVVCTATVETVGPTGVEMEALTAVQVALLTIYDMCKAVDRGMRITDVHVLEKHGGKSGSYLADPQG</sequence>
<protein>
    <recommendedName>
        <fullName evidence="1">Cyclic pyranopterin monophosphate synthase</fullName>
        <ecNumber evidence="1">4.6.1.17</ecNumber>
    </recommendedName>
    <alternativeName>
        <fullName evidence="1">Molybdenum cofactor biosynthesis protein C</fullName>
    </alternativeName>
</protein>
<proteinExistence type="inferred from homology"/>
<evidence type="ECO:0000255" key="1">
    <source>
        <dbReference type="HAMAP-Rule" id="MF_01224"/>
    </source>
</evidence>
<feature type="chain" id="PRO_1000213994" description="Cyclic pyranopterin monophosphate synthase">
    <location>
        <begin position="1"/>
        <end position="163"/>
    </location>
</feature>
<feature type="active site" evidence="1">
    <location>
        <position position="130"/>
    </location>
</feature>
<feature type="binding site" evidence="1">
    <location>
        <begin position="75"/>
        <end position="77"/>
    </location>
    <ligand>
        <name>substrate</name>
    </ligand>
</feature>
<feature type="binding site" evidence="1">
    <location>
        <begin position="115"/>
        <end position="116"/>
    </location>
    <ligand>
        <name>substrate</name>
    </ligand>
</feature>
<reference key="1">
    <citation type="journal article" date="2011" name="J. Bacteriol.">
        <title>Complete genome sequence of the metabolically versatile plant growth-promoting endophyte, Variovorax paradoxus S110.</title>
        <authorList>
            <person name="Han J.I."/>
            <person name="Choi H.K."/>
            <person name="Lee S.W."/>
            <person name="Orwin P.M."/>
            <person name="Kim J."/>
            <person name="Laroe S.L."/>
            <person name="Kim T.G."/>
            <person name="O'Neil J."/>
            <person name="Leadbetter J.R."/>
            <person name="Lee S.Y."/>
            <person name="Hur C.G."/>
            <person name="Spain J.C."/>
            <person name="Ovchinnikova G."/>
            <person name="Goodwin L."/>
            <person name="Han C."/>
        </authorList>
    </citation>
    <scope>NUCLEOTIDE SEQUENCE [LARGE SCALE GENOMIC DNA]</scope>
    <source>
        <strain>S110</strain>
    </source>
</reference>
<keyword id="KW-0456">Lyase</keyword>
<keyword id="KW-0501">Molybdenum cofactor biosynthesis</keyword>
<organism>
    <name type="scientific">Variovorax paradoxus (strain S110)</name>
    <dbReference type="NCBI Taxonomy" id="543728"/>
    <lineage>
        <taxon>Bacteria</taxon>
        <taxon>Pseudomonadati</taxon>
        <taxon>Pseudomonadota</taxon>
        <taxon>Betaproteobacteria</taxon>
        <taxon>Burkholderiales</taxon>
        <taxon>Comamonadaceae</taxon>
        <taxon>Variovorax</taxon>
    </lineage>
</organism>
<name>MOAC_VARPS</name>
<dbReference type="EC" id="4.6.1.17" evidence="1"/>
<dbReference type="EMBL" id="CP001635">
    <property type="protein sequence ID" value="ACS21779.1"/>
    <property type="molecule type" value="Genomic_DNA"/>
</dbReference>
<dbReference type="SMR" id="C5CRA3"/>
<dbReference type="STRING" id="543728.Vapar_5177"/>
<dbReference type="KEGG" id="vap:Vapar_5177"/>
<dbReference type="eggNOG" id="COG0315">
    <property type="taxonomic scope" value="Bacteria"/>
</dbReference>
<dbReference type="HOGENOM" id="CLU_074693_1_1_4"/>
<dbReference type="OrthoDB" id="9794429at2"/>
<dbReference type="UniPathway" id="UPA00344"/>
<dbReference type="GO" id="GO:0061799">
    <property type="term" value="F:cyclic pyranopterin monophosphate synthase activity"/>
    <property type="evidence" value="ECO:0007669"/>
    <property type="project" value="UniProtKB-UniRule"/>
</dbReference>
<dbReference type="GO" id="GO:0006777">
    <property type="term" value="P:Mo-molybdopterin cofactor biosynthetic process"/>
    <property type="evidence" value="ECO:0007669"/>
    <property type="project" value="UniProtKB-UniRule"/>
</dbReference>
<dbReference type="CDD" id="cd01420">
    <property type="entry name" value="MoaC_PE"/>
    <property type="match status" value="1"/>
</dbReference>
<dbReference type="Gene3D" id="3.30.70.640">
    <property type="entry name" value="Molybdopterin cofactor biosynthesis C (MoaC) domain"/>
    <property type="match status" value="1"/>
</dbReference>
<dbReference type="HAMAP" id="MF_01224_B">
    <property type="entry name" value="MoaC_B"/>
    <property type="match status" value="1"/>
</dbReference>
<dbReference type="InterPro" id="IPR023045">
    <property type="entry name" value="MoaC"/>
</dbReference>
<dbReference type="InterPro" id="IPR047594">
    <property type="entry name" value="MoaC_bact/euk"/>
</dbReference>
<dbReference type="InterPro" id="IPR036522">
    <property type="entry name" value="MoaC_sf"/>
</dbReference>
<dbReference type="InterPro" id="IPR050105">
    <property type="entry name" value="MoCo_biosynth_MoaA/MoaC"/>
</dbReference>
<dbReference type="InterPro" id="IPR002820">
    <property type="entry name" value="Mopterin_CF_biosynth-C_dom"/>
</dbReference>
<dbReference type="NCBIfam" id="TIGR00581">
    <property type="entry name" value="moaC"/>
    <property type="match status" value="1"/>
</dbReference>
<dbReference type="NCBIfam" id="NF006870">
    <property type="entry name" value="PRK09364.1"/>
    <property type="match status" value="1"/>
</dbReference>
<dbReference type="PANTHER" id="PTHR22960:SF29">
    <property type="entry name" value="CYCLIC PYRANOPTERIN MONOPHOSPHATE SYNTHASE"/>
    <property type="match status" value="1"/>
</dbReference>
<dbReference type="PANTHER" id="PTHR22960">
    <property type="entry name" value="MOLYBDOPTERIN COFACTOR SYNTHESIS PROTEIN A"/>
    <property type="match status" value="1"/>
</dbReference>
<dbReference type="Pfam" id="PF01967">
    <property type="entry name" value="MoaC"/>
    <property type="match status" value="1"/>
</dbReference>
<dbReference type="SUPFAM" id="SSF55040">
    <property type="entry name" value="Molybdenum cofactor biosynthesis protein C, MoaC"/>
    <property type="match status" value="1"/>
</dbReference>
<comment type="function">
    <text evidence="1">Catalyzes the conversion of (8S)-3',8-cyclo-7,8-dihydroguanosine 5'-triphosphate to cyclic pyranopterin monophosphate (cPMP).</text>
</comment>
<comment type="catalytic activity">
    <reaction evidence="1">
        <text>(8S)-3',8-cyclo-7,8-dihydroguanosine 5'-triphosphate = cyclic pyranopterin phosphate + diphosphate</text>
        <dbReference type="Rhea" id="RHEA:49580"/>
        <dbReference type="ChEBI" id="CHEBI:33019"/>
        <dbReference type="ChEBI" id="CHEBI:59648"/>
        <dbReference type="ChEBI" id="CHEBI:131766"/>
        <dbReference type="EC" id="4.6.1.17"/>
    </reaction>
</comment>
<comment type="pathway">
    <text evidence="1">Cofactor biosynthesis; molybdopterin biosynthesis.</text>
</comment>
<comment type="subunit">
    <text evidence="1">Homohexamer; trimer of dimers.</text>
</comment>
<comment type="similarity">
    <text evidence="1">Belongs to the MoaC family.</text>
</comment>
<accession>C5CRA3</accession>
<gene>
    <name evidence="1" type="primary">moaC</name>
    <name type="ordered locus">Vapar_5177</name>
</gene>